<dbReference type="EMBL" id="S83343">
    <property type="protein sequence ID" value="AAB50734.2"/>
    <property type="molecule type" value="mRNA"/>
</dbReference>
<dbReference type="SMR" id="O04701"/>
<dbReference type="Allergome" id="266">
    <property type="allergen name" value="Cyn d 1"/>
</dbReference>
<dbReference type="Allergome" id="267">
    <property type="allergen name" value="Cyn d 1.0101"/>
</dbReference>
<dbReference type="GlyCosmos" id="O04701">
    <property type="glycosylation" value="1 site, No reported glycans"/>
</dbReference>
<dbReference type="GO" id="GO:0005576">
    <property type="term" value="C:extracellular region"/>
    <property type="evidence" value="ECO:0007669"/>
    <property type="project" value="UniProtKB-SubCell"/>
</dbReference>
<dbReference type="GO" id="GO:0009828">
    <property type="term" value="P:plant-type cell wall loosening"/>
    <property type="evidence" value="ECO:0000250"/>
    <property type="project" value="UniProtKB"/>
</dbReference>
<dbReference type="GO" id="GO:0019953">
    <property type="term" value="P:sexual reproduction"/>
    <property type="evidence" value="ECO:0007669"/>
    <property type="project" value="InterPro"/>
</dbReference>
<dbReference type="CDD" id="cd22275">
    <property type="entry name" value="DPBB_EXPB_N"/>
    <property type="match status" value="1"/>
</dbReference>
<dbReference type="Gene3D" id="2.60.40.760">
    <property type="entry name" value="Expansin, cellulose-binding-like domain"/>
    <property type="match status" value="1"/>
</dbReference>
<dbReference type="Gene3D" id="2.40.40.10">
    <property type="entry name" value="RlpA-like domain"/>
    <property type="match status" value="1"/>
</dbReference>
<dbReference type="InterPro" id="IPR007118">
    <property type="entry name" value="Expan_Lol_pI"/>
</dbReference>
<dbReference type="InterPro" id="IPR007112">
    <property type="entry name" value="Expansin/allergen_DPBB_dom"/>
</dbReference>
<dbReference type="InterPro" id="IPR007117">
    <property type="entry name" value="Expansin_CBD"/>
</dbReference>
<dbReference type="InterPro" id="IPR036749">
    <property type="entry name" value="Expansin_CBD_sf"/>
</dbReference>
<dbReference type="InterPro" id="IPR005795">
    <property type="entry name" value="LolPI"/>
</dbReference>
<dbReference type="InterPro" id="IPR009009">
    <property type="entry name" value="RlpA-like_DPBB"/>
</dbReference>
<dbReference type="InterPro" id="IPR036908">
    <property type="entry name" value="RlpA-like_sf"/>
</dbReference>
<dbReference type="PANTHER" id="PTHR31692:SF21">
    <property type="entry name" value="EXPANSIN-B1"/>
    <property type="match status" value="1"/>
</dbReference>
<dbReference type="PANTHER" id="PTHR31692">
    <property type="entry name" value="EXPANSIN-B3"/>
    <property type="match status" value="1"/>
</dbReference>
<dbReference type="Pfam" id="PF03330">
    <property type="entry name" value="DPBB_1"/>
    <property type="match status" value="1"/>
</dbReference>
<dbReference type="Pfam" id="PF01357">
    <property type="entry name" value="Expansin_C"/>
    <property type="match status" value="1"/>
</dbReference>
<dbReference type="PRINTS" id="PR01225">
    <property type="entry name" value="EXPANSNFAMLY"/>
</dbReference>
<dbReference type="PRINTS" id="PR00829">
    <property type="entry name" value="LOLP1ALLERGN"/>
</dbReference>
<dbReference type="SMART" id="SM00837">
    <property type="entry name" value="DPBB_1"/>
    <property type="match status" value="1"/>
</dbReference>
<dbReference type="SUPFAM" id="SSF50685">
    <property type="entry name" value="Barwin-like endoglucanases"/>
    <property type="match status" value="1"/>
</dbReference>
<dbReference type="SUPFAM" id="SSF49590">
    <property type="entry name" value="PHL pollen allergen"/>
    <property type="match status" value="1"/>
</dbReference>
<dbReference type="PROSITE" id="PS50843">
    <property type="entry name" value="EXPANSIN_CBD"/>
    <property type="match status" value="1"/>
</dbReference>
<dbReference type="PROSITE" id="PS50842">
    <property type="entry name" value="EXPANSIN_EG45"/>
    <property type="match status" value="1"/>
</dbReference>
<keyword id="KW-0020">Allergen</keyword>
<keyword id="KW-0903">Direct protein sequencing</keyword>
<keyword id="KW-0325">Glycoprotein</keyword>
<keyword id="KW-0964">Secreted</keyword>
<name>MPAC1_CYNDA</name>
<reference key="1">
    <citation type="journal article" date="1996" name="J. Allergy Clin. Immunol.">
        <title>Cloning and expression in yeast Pichia pastoris of a biologically active form of Cyn d 1, the major allergen of Bermuda grass pollen.</title>
        <authorList>
            <person name="Smith P.M."/>
            <person name="Suphioglu C."/>
            <person name="Griffith I.J."/>
            <person name="Theriault K."/>
            <person name="Knox R.B."/>
            <person name="Singh M.B."/>
        </authorList>
    </citation>
    <scope>NUCLEOTIDE SEQUENCE [MRNA]</scope>
    <scope>PARTIAL PROTEIN SEQUENCE</scope>
    <source>
        <tissue>Pollen</tissue>
    </source>
</reference>
<gene>
    <name type="primary">CYND1</name>
</gene>
<comment type="subcellular location">
    <subcellularLocation>
        <location>Secreted</location>
    </subcellularLocation>
</comment>
<comment type="allergen">
    <text>Causes an allergic reaction in human. Causes grass pollen allergy. Binds to IgE.</text>
</comment>
<comment type="similarity">
    <text evidence="4">Belongs to the expansin family. Expansin B subfamily.</text>
</comment>
<organism>
    <name type="scientific">Cynodon dactylon</name>
    <name type="common">Bermuda grass</name>
    <name type="synonym">Panicum dactylon</name>
    <dbReference type="NCBI Taxonomy" id="28909"/>
    <lineage>
        <taxon>Eukaryota</taxon>
        <taxon>Viridiplantae</taxon>
        <taxon>Streptophyta</taxon>
        <taxon>Embryophyta</taxon>
        <taxon>Tracheophyta</taxon>
        <taxon>Spermatophyta</taxon>
        <taxon>Magnoliopsida</taxon>
        <taxon>Liliopsida</taxon>
        <taxon>Poales</taxon>
        <taxon>Poaceae</taxon>
        <taxon>PACMAD clade</taxon>
        <taxon>Chloridoideae</taxon>
        <taxon>Cynodonteae</taxon>
        <taxon>Eleusininae</taxon>
        <taxon>Cynodon</taxon>
    </lineage>
</organism>
<feature type="chain" id="PRO_0000154569" description="Major pollen allergen Cyn d 1">
    <location>
        <begin position="1"/>
        <end position="246"/>
    </location>
</feature>
<feature type="domain" description="Expansin-like EG45" evidence="3">
    <location>
        <begin position="39"/>
        <end position="145"/>
    </location>
</feature>
<feature type="domain" description="Expansin-like CBD" evidence="2">
    <location>
        <begin position="159"/>
        <end position="240"/>
    </location>
</feature>
<feature type="glycosylation site" description="N-linked (GlcNAc...) asparagine" evidence="1">
    <location>
        <position position="9"/>
    </location>
</feature>
<proteinExistence type="evidence at protein level"/>
<accession>O04701</accession>
<protein>
    <recommendedName>
        <fullName>Major pollen allergen Cyn d 1</fullName>
    </recommendedName>
    <allergenName>Cyn d 1</allergenName>
</protein>
<sequence>AIGDKPGPNITATYGSKWLEARATFYGSNPRGAAPDDHGGACGYKDVDKPPFDGMTACGNEPIFKDGLGCRACYEIKCKEPVECSGEPVLVKITDKNYEHIAAYHFDLSGKAFGAMAKKGQEDKLRKAGELTLQFRRVKCKYPSGTKITFHIEKGSNDHYLALLVKYAAGDGNIVAVDIKPRDSDEFIPMKSSWGAIWRIDPKKPLKGPFSIRLTSEGGAHLVQDDVIPANWKPDTVYTSKLQFGA</sequence>
<evidence type="ECO:0000255" key="1"/>
<evidence type="ECO:0000255" key="2">
    <source>
        <dbReference type="PROSITE-ProRule" id="PRU00078"/>
    </source>
</evidence>
<evidence type="ECO:0000255" key="3">
    <source>
        <dbReference type="PROSITE-ProRule" id="PRU00079"/>
    </source>
</evidence>
<evidence type="ECO:0000305" key="4"/>